<reference key="1">
    <citation type="journal article" date="2000" name="Nature">
        <title>Sequence and analysis of chromosome 1 of the plant Arabidopsis thaliana.</title>
        <authorList>
            <person name="Theologis A."/>
            <person name="Ecker J.R."/>
            <person name="Palm C.J."/>
            <person name="Federspiel N.A."/>
            <person name="Kaul S."/>
            <person name="White O."/>
            <person name="Alonso J."/>
            <person name="Altafi H."/>
            <person name="Araujo R."/>
            <person name="Bowman C.L."/>
            <person name="Brooks S.Y."/>
            <person name="Buehler E."/>
            <person name="Chan A."/>
            <person name="Chao Q."/>
            <person name="Chen H."/>
            <person name="Cheuk R.F."/>
            <person name="Chin C.W."/>
            <person name="Chung M.K."/>
            <person name="Conn L."/>
            <person name="Conway A.B."/>
            <person name="Conway A.R."/>
            <person name="Creasy T.H."/>
            <person name="Dewar K."/>
            <person name="Dunn P."/>
            <person name="Etgu P."/>
            <person name="Feldblyum T.V."/>
            <person name="Feng J.-D."/>
            <person name="Fong B."/>
            <person name="Fujii C.Y."/>
            <person name="Gill J.E."/>
            <person name="Goldsmith A.D."/>
            <person name="Haas B."/>
            <person name="Hansen N.F."/>
            <person name="Hughes B."/>
            <person name="Huizar L."/>
            <person name="Hunter J.L."/>
            <person name="Jenkins J."/>
            <person name="Johnson-Hopson C."/>
            <person name="Khan S."/>
            <person name="Khaykin E."/>
            <person name="Kim C.J."/>
            <person name="Koo H.L."/>
            <person name="Kremenetskaia I."/>
            <person name="Kurtz D.B."/>
            <person name="Kwan A."/>
            <person name="Lam B."/>
            <person name="Langin-Hooper S."/>
            <person name="Lee A."/>
            <person name="Lee J.M."/>
            <person name="Lenz C.A."/>
            <person name="Li J.H."/>
            <person name="Li Y.-P."/>
            <person name="Lin X."/>
            <person name="Liu S.X."/>
            <person name="Liu Z.A."/>
            <person name="Luros J.S."/>
            <person name="Maiti R."/>
            <person name="Marziali A."/>
            <person name="Militscher J."/>
            <person name="Miranda M."/>
            <person name="Nguyen M."/>
            <person name="Nierman W.C."/>
            <person name="Osborne B.I."/>
            <person name="Pai G."/>
            <person name="Peterson J."/>
            <person name="Pham P.K."/>
            <person name="Rizzo M."/>
            <person name="Rooney T."/>
            <person name="Rowley D."/>
            <person name="Sakano H."/>
            <person name="Salzberg S.L."/>
            <person name="Schwartz J.R."/>
            <person name="Shinn P."/>
            <person name="Southwick A.M."/>
            <person name="Sun H."/>
            <person name="Tallon L.J."/>
            <person name="Tambunga G."/>
            <person name="Toriumi M.J."/>
            <person name="Town C.D."/>
            <person name="Utterback T."/>
            <person name="Van Aken S."/>
            <person name="Vaysberg M."/>
            <person name="Vysotskaia V.S."/>
            <person name="Walker M."/>
            <person name="Wu D."/>
            <person name="Yu G."/>
            <person name="Fraser C.M."/>
            <person name="Venter J.C."/>
            <person name="Davis R.W."/>
        </authorList>
    </citation>
    <scope>NUCLEOTIDE SEQUENCE [LARGE SCALE GENOMIC DNA]</scope>
    <source>
        <strain>cv. Columbia</strain>
    </source>
</reference>
<reference key="2">
    <citation type="journal article" date="2017" name="Plant J.">
        <title>Araport11: a complete reannotation of the Arabidopsis thaliana reference genome.</title>
        <authorList>
            <person name="Cheng C.Y."/>
            <person name="Krishnakumar V."/>
            <person name="Chan A.P."/>
            <person name="Thibaud-Nissen F."/>
            <person name="Schobel S."/>
            <person name="Town C.D."/>
        </authorList>
    </citation>
    <scope>GENOME REANNOTATION</scope>
    <source>
        <strain>cv. Columbia</strain>
    </source>
</reference>
<reference key="3">
    <citation type="journal article" date="2014" name="Plant Cell">
        <title>C2-domain abscisic acid-related proteins mediate the interaction of PYR/PYL/RCAR abscisic acid receptors with the plasma membrane and regulate abscisic acid sensitivity in Arabidopsis.</title>
        <authorList>
            <person name="Rodriguez L."/>
            <person name="Gonzalez-Guzman M."/>
            <person name="Diaz M."/>
            <person name="Rodrigues A."/>
            <person name="Izquierdo-Garcia A.C."/>
            <person name="Peirats-Llobet M."/>
            <person name="Fernandez M.A."/>
            <person name="Antoni R."/>
            <person name="Fernandez D."/>
            <person name="Marquez J.A."/>
            <person name="Mulet J.M."/>
            <person name="Albert A."/>
            <person name="Rodriguez P.L."/>
        </authorList>
    </citation>
    <scope>GENE FAMILY</scope>
    <scope>NOMENCLATURE</scope>
</reference>
<feature type="chain" id="PRO_0000433313" description="Protein C2-DOMAIN ABA-RELATED 3">
    <location>
        <begin position="1"/>
        <end position="168"/>
    </location>
</feature>
<feature type="domain" description="C2" evidence="3">
    <location>
        <begin position="1"/>
        <end position="106"/>
    </location>
</feature>
<feature type="binding site" evidence="2">
    <location>
        <position position="24"/>
    </location>
    <ligand>
        <name>Ca(2+)</name>
        <dbReference type="ChEBI" id="CHEBI:29108"/>
        <label>1</label>
    </ligand>
</feature>
<feature type="binding site" evidence="2">
    <location>
        <position position="25"/>
    </location>
    <ligand>
        <name>Ca(2+)</name>
        <dbReference type="ChEBI" id="CHEBI:29108"/>
        <label>1</label>
    </ligand>
</feature>
<feature type="binding site" evidence="2">
    <location>
        <position position="25"/>
    </location>
    <ligand>
        <name>Ca(2+)</name>
        <dbReference type="ChEBI" id="CHEBI:29108"/>
        <label>2</label>
    </ligand>
</feature>
<feature type="binding site" evidence="2">
    <location>
        <position position="30"/>
    </location>
    <ligand>
        <name>Ca(2+)</name>
        <dbReference type="ChEBI" id="CHEBI:29108"/>
        <label>2</label>
    </ligand>
</feature>
<feature type="binding site" evidence="2">
    <location>
        <position position="76"/>
    </location>
    <ligand>
        <name>Ca(2+)</name>
        <dbReference type="ChEBI" id="CHEBI:29108"/>
        <label>1</label>
    </ligand>
</feature>
<feature type="binding site" evidence="2">
    <location>
        <position position="76"/>
    </location>
    <ligand>
        <name>Ca(2+)</name>
        <dbReference type="ChEBI" id="CHEBI:29108"/>
        <label>2</label>
    </ligand>
</feature>
<feature type="binding site" evidence="2">
    <location>
        <position position="77"/>
    </location>
    <ligand>
        <name>Ca(2+)</name>
        <dbReference type="ChEBI" id="CHEBI:29108"/>
        <label>2</label>
    </ligand>
</feature>
<feature type="binding site" evidence="2">
    <location>
        <position position="78"/>
    </location>
    <ligand>
        <name>Ca(2+)</name>
        <dbReference type="ChEBI" id="CHEBI:29108"/>
        <label>1</label>
    </ligand>
</feature>
<feature type="binding site" evidence="2">
    <location>
        <position position="78"/>
    </location>
    <ligand>
        <name>Ca(2+)</name>
        <dbReference type="ChEBI" id="CHEBI:29108"/>
        <label>2</label>
    </ligand>
</feature>
<feature type="binding site" evidence="2">
    <location>
        <position position="84"/>
    </location>
    <ligand>
        <name>Ca(2+)</name>
        <dbReference type="ChEBI" id="CHEBI:29108"/>
        <label>1</label>
    </ligand>
</feature>
<gene>
    <name evidence="4" type="primary">CAR3</name>
    <name evidence="6" type="ordered locus">At1g73580</name>
    <name evidence="7" type="ORF">F6D5.3</name>
</gene>
<name>CAR3_ARATH</name>
<organism evidence="8">
    <name type="scientific">Arabidopsis thaliana</name>
    <name type="common">Mouse-ear cress</name>
    <dbReference type="NCBI Taxonomy" id="3702"/>
    <lineage>
        <taxon>Eukaryota</taxon>
        <taxon>Viridiplantae</taxon>
        <taxon>Streptophyta</taxon>
        <taxon>Embryophyta</taxon>
        <taxon>Tracheophyta</taxon>
        <taxon>Spermatophyta</taxon>
        <taxon>Magnoliopsida</taxon>
        <taxon>eudicotyledons</taxon>
        <taxon>Gunneridae</taxon>
        <taxon>Pentapetalae</taxon>
        <taxon>rosids</taxon>
        <taxon>malvids</taxon>
        <taxon>Brassicales</taxon>
        <taxon>Brassicaceae</taxon>
        <taxon>Camelineae</taxon>
        <taxon>Arabidopsis</taxon>
    </lineage>
</organism>
<proteinExistence type="inferred from homology"/>
<protein>
    <recommendedName>
        <fullName evidence="4">Protein C2-DOMAIN ABA-RELATED 3</fullName>
    </recommendedName>
</protein>
<accession>Q9C6B7</accession>
<sequence length="168" mass="19117">MSLMDNLLGILRVRVQRGVNLAVRDVSSSDPYVVLKLGRQKLKTKVVKQNVNPQWQEDLSFTVTDPNLPLTLIVYDHDFFSKDDKMGDAEIDLKPYIEALRMELSGLPDGTIISTIGPSRGNCLAEESYIRWINDRIVQHICLRLRNVERGEVEIELQWIDLPGSKGL</sequence>
<comment type="function">
    <text evidence="1 2">Stimulates the GTPase/ATPase activities of Obg-like ATPases (By similarity). Mediates the transient calcium-dependent interaction of PYR/PYL/RCAR abscisic acid (ABA) receptors with the plasma membrane and thus regulates ABA sensitivity (By similarity).</text>
</comment>
<comment type="cofactor">
    <cofactor evidence="3">
        <name>Ca(2+)</name>
        <dbReference type="ChEBI" id="CHEBI:29108"/>
    </cofactor>
</comment>
<comment type="subunit">
    <text evidence="1">Binds to PYR/PYL/RCAR abscisic acid intracellular receptors in an ABA-independent manner, both at the plasma membrane and in the nucleus.</text>
</comment>
<comment type="subcellular location">
    <subcellularLocation>
        <location evidence="1">Cell membrane</location>
    </subcellularLocation>
    <subcellularLocation>
        <location evidence="1">Nucleus</location>
    </subcellularLocation>
</comment>
<comment type="similarity">
    <text evidence="5">Belongs to the plant CAR protein family.</text>
</comment>
<dbReference type="EMBL" id="AC079676">
    <property type="protein sequence ID" value="AAG51808.1"/>
    <property type="molecule type" value="Genomic_DNA"/>
</dbReference>
<dbReference type="EMBL" id="CP002684">
    <property type="protein sequence ID" value="AEE35478.1"/>
    <property type="molecule type" value="Genomic_DNA"/>
</dbReference>
<dbReference type="PIR" id="F96762">
    <property type="entry name" value="F96762"/>
</dbReference>
<dbReference type="RefSeq" id="NP_177499.1">
    <property type="nucleotide sequence ID" value="NM_106016.2"/>
</dbReference>
<dbReference type="SMR" id="Q9C6B7"/>
<dbReference type="FunCoup" id="Q9C6B7">
    <property type="interactions" value="10"/>
</dbReference>
<dbReference type="STRING" id="3702.Q9C6B7"/>
<dbReference type="PaxDb" id="3702-AT1G73580.1"/>
<dbReference type="ProteomicsDB" id="240283"/>
<dbReference type="EnsemblPlants" id="AT1G73580.1">
    <property type="protein sequence ID" value="AT1G73580.1"/>
    <property type="gene ID" value="AT1G73580"/>
</dbReference>
<dbReference type="GeneID" id="843692"/>
<dbReference type="Gramene" id="AT1G73580.1">
    <property type="protein sequence ID" value="AT1G73580.1"/>
    <property type="gene ID" value="AT1G73580"/>
</dbReference>
<dbReference type="KEGG" id="ath:AT1G73580"/>
<dbReference type="Araport" id="AT1G73580"/>
<dbReference type="TAIR" id="AT1G73580">
    <property type="gene designation" value="CAR3"/>
</dbReference>
<dbReference type="eggNOG" id="KOG1030">
    <property type="taxonomic scope" value="Eukaryota"/>
</dbReference>
<dbReference type="HOGENOM" id="CLU_106037_0_0_1"/>
<dbReference type="InParanoid" id="Q9C6B7"/>
<dbReference type="OMA" id="CEESHIM"/>
<dbReference type="OrthoDB" id="73919at2759"/>
<dbReference type="PhylomeDB" id="Q9C6B7"/>
<dbReference type="PRO" id="PR:Q9C6B7"/>
<dbReference type="Proteomes" id="UP000006548">
    <property type="component" value="Chromosome 1"/>
</dbReference>
<dbReference type="ExpressionAtlas" id="Q9C6B7">
    <property type="expression patterns" value="baseline and differential"/>
</dbReference>
<dbReference type="GO" id="GO:0005634">
    <property type="term" value="C:nucleus"/>
    <property type="evidence" value="ECO:0000250"/>
    <property type="project" value="UniProtKB"/>
</dbReference>
<dbReference type="GO" id="GO:0005886">
    <property type="term" value="C:plasma membrane"/>
    <property type="evidence" value="ECO:0000250"/>
    <property type="project" value="UniProtKB"/>
</dbReference>
<dbReference type="GO" id="GO:0005096">
    <property type="term" value="F:GTPase activator activity"/>
    <property type="evidence" value="ECO:0000250"/>
    <property type="project" value="UniProtKB"/>
</dbReference>
<dbReference type="GO" id="GO:0046872">
    <property type="term" value="F:metal ion binding"/>
    <property type="evidence" value="ECO:0007669"/>
    <property type="project" value="UniProtKB-KW"/>
</dbReference>
<dbReference type="GO" id="GO:0005543">
    <property type="term" value="F:phospholipid binding"/>
    <property type="evidence" value="ECO:0000250"/>
    <property type="project" value="UniProtKB"/>
</dbReference>
<dbReference type="GO" id="GO:0009738">
    <property type="term" value="P:abscisic acid-activated signaling pathway"/>
    <property type="evidence" value="ECO:0007669"/>
    <property type="project" value="UniProtKB-KW"/>
</dbReference>
<dbReference type="GO" id="GO:0009789">
    <property type="term" value="P:positive regulation of abscisic acid-activated signaling pathway"/>
    <property type="evidence" value="ECO:0000250"/>
    <property type="project" value="UniProtKB"/>
</dbReference>
<dbReference type="GO" id="GO:0043547">
    <property type="term" value="P:positive regulation of GTPase activity"/>
    <property type="evidence" value="ECO:0000250"/>
    <property type="project" value="UniProtKB"/>
</dbReference>
<dbReference type="CDD" id="cd04038">
    <property type="entry name" value="C2_ArfGAP"/>
    <property type="match status" value="1"/>
</dbReference>
<dbReference type="Gene3D" id="2.60.40.150">
    <property type="entry name" value="C2 domain"/>
    <property type="match status" value="1"/>
</dbReference>
<dbReference type="InterPro" id="IPR000008">
    <property type="entry name" value="C2_dom"/>
</dbReference>
<dbReference type="InterPro" id="IPR035892">
    <property type="entry name" value="C2_domain_sf"/>
</dbReference>
<dbReference type="InterPro" id="IPR044562">
    <property type="entry name" value="CAR1-11"/>
</dbReference>
<dbReference type="PANTHER" id="PTHR45933:SF10">
    <property type="entry name" value="PROTEIN C2-DOMAIN ABA-RELATED 3"/>
    <property type="match status" value="1"/>
</dbReference>
<dbReference type="PANTHER" id="PTHR45933">
    <property type="entry name" value="PROTEIN C2-DOMAIN ABA-RELATED 4"/>
    <property type="match status" value="1"/>
</dbReference>
<dbReference type="Pfam" id="PF00168">
    <property type="entry name" value="C2"/>
    <property type="match status" value="1"/>
</dbReference>
<dbReference type="SMART" id="SM00239">
    <property type="entry name" value="C2"/>
    <property type="match status" value="1"/>
</dbReference>
<dbReference type="SUPFAM" id="SSF49562">
    <property type="entry name" value="C2 domain (Calcium/lipid-binding domain, CaLB)"/>
    <property type="match status" value="1"/>
</dbReference>
<dbReference type="PROSITE" id="PS50004">
    <property type="entry name" value="C2"/>
    <property type="match status" value="1"/>
</dbReference>
<keyword id="KW-0938">Abscisic acid signaling pathway</keyword>
<keyword id="KW-0106">Calcium</keyword>
<keyword id="KW-1003">Cell membrane</keyword>
<keyword id="KW-0343">GTPase activation</keyword>
<keyword id="KW-0446">Lipid-binding</keyword>
<keyword id="KW-0472">Membrane</keyword>
<keyword id="KW-0479">Metal-binding</keyword>
<keyword id="KW-0539">Nucleus</keyword>
<keyword id="KW-1185">Reference proteome</keyword>
<evidence type="ECO:0000250" key="1">
    <source>
        <dbReference type="UniProtKB" id="Q9FHP6"/>
    </source>
</evidence>
<evidence type="ECO:0000250" key="2">
    <source>
        <dbReference type="UniProtKB" id="Q9LVH4"/>
    </source>
</evidence>
<evidence type="ECO:0000255" key="3">
    <source>
        <dbReference type="PROSITE-ProRule" id="PRU00041"/>
    </source>
</evidence>
<evidence type="ECO:0000303" key="4">
    <source>
    </source>
</evidence>
<evidence type="ECO:0000305" key="5">
    <source>
    </source>
</evidence>
<evidence type="ECO:0000312" key="6">
    <source>
        <dbReference type="Araport" id="AT1G73580"/>
    </source>
</evidence>
<evidence type="ECO:0000312" key="7">
    <source>
        <dbReference type="EMBL" id="AAG51808.1"/>
    </source>
</evidence>
<evidence type="ECO:0000312" key="8">
    <source>
        <dbReference type="Proteomes" id="UP000006548"/>
    </source>
</evidence>